<organism>
    <name type="scientific">Triticum aestivum</name>
    <name type="common">Wheat</name>
    <dbReference type="NCBI Taxonomy" id="4565"/>
    <lineage>
        <taxon>Eukaryota</taxon>
        <taxon>Viridiplantae</taxon>
        <taxon>Streptophyta</taxon>
        <taxon>Embryophyta</taxon>
        <taxon>Tracheophyta</taxon>
        <taxon>Spermatophyta</taxon>
        <taxon>Magnoliopsida</taxon>
        <taxon>Liliopsida</taxon>
        <taxon>Poales</taxon>
        <taxon>Poaceae</taxon>
        <taxon>BOP clade</taxon>
        <taxon>Pooideae</taxon>
        <taxon>Triticodae</taxon>
        <taxon>Triticeae</taxon>
        <taxon>Triticinae</taxon>
        <taxon>Triticum</taxon>
    </lineage>
</organism>
<reference evidence="2" key="1">
    <citation type="submission" date="2001-11" db="UniProtKB">
        <title>The amino acid sequence of wheat flour arabinogalactan-peptide is identical to part of grain softness protein GSP-1 and leads to an improved structural model.</title>
        <authorList>
            <person name="Van den Bulck K."/>
            <person name="Loosveld A.M.-A."/>
            <person name="Courtin C.M."/>
            <person name="Proost P."/>
            <person name="Van Damme J."/>
            <person name="Robben J."/>
            <person name="Mort A."/>
            <person name="Delcour J.A."/>
        </authorList>
    </citation>
    <scope>PROTEIN SEQUENCE</scope>
    <scope>HYDROXYLATION AT PRO-5; PRO-7 AND PRO-12</scope>
    <scope>GLYCOSYLATION AT PRO-5; PRO-7 AND PRO-12</scope>
    <scope>STRUCTURE OF CARBOHYDRATE</scope>
</reference>
<comment type="PTM">
    <text evidence="1">O-linked glycan consists of a D-galactopyranosyl-backbone, 1-3 or 1-6 linked, substituted with L-arabinofuranosidase probably at the O-3 position.</text>
</comment>
<feature type="peptide" id="PRO_0000044105" description="Arabinogalactan peptide">
    <location>
        <begin position="1"/>
        <end position="15"/>
    </location>
</feature>
<feature type="modified residue" description="4-hydroxyproline" evidence="1">
    <location>
        <position position="5"/>
    </location>
</feature>
<feature type="modified residue" description="4-hydroxyproline" evidence="1">
    <location>
        <position position="7"/>
    </location>
</feature>
<feature type="modified residue" description="4-hydroxyproline" evidence="1">
    <location>
        <position position="12"/>
    </location>
</feature>
<feature type="glycosylation site" description="O-linked (Gal...) hydroxyproline" evidence="1">
    <location>
        <position position="5"/>
    </location>
</feature>
<feature type="glycosylation site" description="O-linked (Gal...) hydroxyproline" evidence="1">
    <location>
        <position position="7"/>
    </location>
</feature>
<feature type="glycosylation site" description="O-linked (Gal...) hydroxyproline" evidence="1">
    <location>
        <position position="12"/>
    </location>
</feature>
<evidence type="ECO:0000269" key="1">
    <source ref="1"/>
</evidence>
<evidence type="ECO:0000305" key="2"/>
<sequence length="15" mass="1488">YAEVPSPAAQAPTAD</sequence>
<name>AGPE_WHEAT</name>
<accession>P83184</accession>
<protein>
    <recommendedName>
        <fullName>Arabinogalactan peptide</fullName>
    </recommendedName>
</protein>
<dbReference type="Proteomes" id="UP000019116">
    <property type="component" value="Unplaced"/>
</dbReference>
<proteinExistence type="evidence at protein level"/>
<keyword id="KW-0903">Direct protein sequencing</keyword>
<keyword id="KW-0325">Glycoprotein</keyword>
<keyword id="KW-0379">Hydroxylation</keyword>
<keyword id="KW-1185">Reference proteome</keyword>